<proteinExistence type="inferred from homology"/>
<organism>
    <name type="scientific">Prochlorococcus marinus subsp. pastoris (strain CCMP1986 / NIES-2087 / MED4)</name>
    <dbReference type="NCBI Taxonomy" id="59919"/>
    <lineage>
        <taxon>Bacteria</taxon>
        <taxon>Bacillati</taxon>
        <taxon>Cyanobacteriota</taxon>
        <taxon>Cyanophyceae</taxon>
        <taxon>Synechococcales</taxon>
        <taxon>Prochlorococcaceae</taxon>
        <taxon>Prochlorococcus</taxon>
    </lineage>
</organism>
<evidence type="ECO:0000255" key="1">
    <source>
        <dbReference type="HAMAP-Rule" id="MF_01344"/>
    </source>
</evidence>
<accession>Q7TUF3</accession>
<gene>
    <name evidence="1" type="primary">petD</name>
    <name type="ordered locus">PMM0326</name>
</gene>
<name>PETD_PROMP</name>
<sequence>MSTLKKPDLSDPKLRAKLAKGMGHNYYGEPAWPNDLLYIFPVVILGTIACVVGLAVLDPAMLGDKANPFATPLEILPEWYLYPVFQILRVVPNKLLGIALQTLIPLGLMILPFIENVNKFSNPFRRPVAMSVFLFGTFLTIYLGIGACLPIDKSLTLGLF</sequence>
<reference key="1">
    <citation type="journal article" date="2003" name="Nature">
        <title>Genome divergence in two Prochlorococcus ecotypes reflects oceanic niche differentiation.</title>
        <authorList>
            <person name="Rocap G."/>
            <person name="Larimer F.W."/>
            <person name="Lamerdin J.E."/>
            <person name="Malfatti S."/>
            <person name="Chain P."/>
            <person name="Ahlgren N.A."/>
            <person name="Arellano A."/>
            <person name="Coleman M."/>
            <person name="Hauser L."/>
            <person name="Hess W.R."/>
            <person name="Johnson Z.I."/>
            <person name="Land M.L."/>
            <person name="Lindell D."/>
            <person name="Post A.F."/>
            <person name="Regala W."/>
            <person name="Shah M."/>
            <person name="Shaw S.L."/>
            <person name="Steglich C."/>
            <person name="Sullivan M.B."/>
            <person name="Ting C.S."/>
            <person name="Tolonen A."/>
            <person name="Webb E.A."/>
            <person name="Zinser E.R."/>
            <person name="Chisholm S.W."/>
        </authorList>
    </citation>
    <scope>NUCLEOTIDE SEQUENCE [LARGE SCALE GENOMIC DNA]</scope>
    <source>
        <strain>CCMP1986 / NIES-2087 / MED4</strain>
    </source>
</reference>
<keyword id="KW-0249">Electron transport</keyword>
<keyword id="KW-0472">Membrane</keyword>
<keyword id="KW-0602">Photosynthesis</keyword>
<keyword id="KW-0793">Thylakoid</keyword>
<keyword id="KW-0812">Transmembrane</keyword>
<keyword id="KW-1133">Transmembrane helix</keyword>
<keyword id="KW-0813">Transport</keyword>
<feature type="chain" id="PRO_0000061906" description="Cytochrome b6-f complex subunit 4">
    <location>
        <begin position="1"/>
        <end position="160"/>
    </location>
</feature>
<feature type="transmembrane region" description="Helical" evidence="1">
    <location>
        <begin position="36"/>
        <end position="56"/>
    </location>
</feature>
<feature type="transmembrane region" description="Helical" evidence="1">
    <location>
        <begin position="95"/>
        <end position="115"/>
    </location>
</feature>
<feature type="transmembrane region" description="Helical" evidence="1">
    <location>
        <begin position="131"/>
        <end position="151"/>
    </location>
</feature>
<protein>
    <recommendedName>
        <fullName evidence="1">Cytochrome b6-f complex subunit 4</fullName>
    </recommendedName>
    <alternativeName>
        <fullName evidence="1">17 kDa polypeptide</fullName>
    </alternativeName>
</protein>
<dbReference type="EMBL" id="BX548174">
    <property type="protein sequence ID" value="CAE18785.1"/>
    <property type="molecule type" value="Genomic_DNA"/>
</dbReference>
<dbReference type="RefSeq" id="WP_011131963.1">
    <property type="nucleotide sequence ID" value="NC_005072.1"/>
</dbReference>
<dbReference type="SMR" id="Q7TUF3"/>
<dbReference type="STRING" id="59919.PMM0326"/>
<dbReference type="KEGG" id="pmm:PMM0326"/>
<dbReference type="eggNOG" id="COG1290">
    <property type="taxonomic scope" value="Bacteria"/>
</dbReference>
<dbReference type="HOGENOM" id="CLU_112652_0_0_3"/>
<dbReference type="OrthoDB" id="529454at2"/>
<dbReference type="Proteomes" id="UP000001026">
    <property type="component" value="Chromosome"/>
</dbReference>
<dbReference type="GO" id="GO:0031676">
    <property type="term" value="C:plasma membrane-derived thylakoid membrane"/>
    <property type="evidence" value="ECO:0007669"/>
    <property type="project" value="UniProtKB-SubCell"/>
</dbReference>
<dbReference type="GO" id="GO:0045158">
    <property type="term" value="F:electron transporter, transferring electrons within cytochrome b6/f complex of photosystem II activity"/>
    <property type="evidence" value="ECO:0007669"/>
    <property type="project" value="UniProtKB-UniRule"/>
</dbReference>
<dbReference type="GO" id="GO:0045156">
    <property type="term" value="F:electron transporter, transferring electrons within the cyclic electron transport pathway of photosynthesis activity"/>
    <property type="evidence" value="ECO:0007669"/>
    <property type="project" value="InterPro"/>
</dbReference>
<dbReference type="GO" id="GO:0008121">
    <property type="term" value="F:ubiquinol-cytochrome-c reductase activity"/>
    <property type="evidence" value="ECO:0007669"/>
    <property type="project" value="TreeGrafter"/>
</dbReference>
<dbReference type="GO" id="GO:0009767">
    <property type="term" value="P:photosynthetic electron transport chain"/>
    <property type="evidence" value="ECO:0007669"/>
    <property type="project" value="InterPro"/>
</dbReference>
<dbReference type="CDD" id="cd00290">
    <property type="entry name" value="cytochrome_b_C"/>
    <property type="match status" value="1"/>
</dbReference>
<dbReference type="FunFam" id="1.10.287.980:FF:000001">
    <property type="entry name" value="Cytochrome b6-f complex subunit 4"/>
    <property type="match status" value="1"/>
</dbReference>
<dbReference type="FunFam" id="1.20.5.510:FF:000002">
    <property type="entry name" value="Cytochrome b6-f complex subunit 4"/>
    <property type="match status" value="1"/>
</dbReference>
<dbReference type="Gene3D" id="1.10.287.980">
    <property type="entry name" value="plastocyanin oxidoreductase"/>
    <property type="match status" value="1"/>
</dbReference>
<dbReference type="Gene3D" id="1.20.5.510">
    <property type="entry name" value="Single helix bin"/>
    <property type="match status" value="1"/>
</dbReference>
<dbReference type="HAMAP" id="MF_01344">
    <property type="entry name" value="Cytb6_f_subIV"/>
    <property type="match status" value="1"/>
</dbReference>
<dbReference type="InterPro" id="IPR005798">
    <property type="entry name" value="Cyt_b/b6_C"/>
</dbReference>
<dbReference type="InterPro" id="IPR036150">
    <property type="entry name" value="Cyt_b/b6_C_sf"/>
</dbReference>
<dbReference type="InterPro" id="IPR005870">
    <property type="entry name" value="Cyt_b6/f_cplx_suIV"/>
</dbReference>
<dbReference type="InterPro" id="IPR048260">
    <property type="entry name" value="Cytochrome_b_C_euk/bac"/>
</dbReference>
<dbReference type="NCBIfam" id="TIGR01156">
    <property type="entry name" value="cytb6_f_IV"/>
    <property type="match status" value="1"/>
</dbReference>
<dbReference type="PANTHER" id="PTHR19271">
    <property type="entry name" value="CYTOCHROME B"/>
    <property type="match status" value="1"/>
</dbReference>
<dbReference type="PANTHER" id="PTHR19271:SF41">
    <property type="entry name" value="CYTOCHROME B_B6 C-TERMINAL REGION PROFILE DOMAIN-CONTAINING PROTEIN"/>
    <property type="match status" value="1"/>
</dbReference>
<dbReference type="Pfam" id="PF00032">
    <property type="entry name" value="Cytochrom_B_C"/>
    <property type="match status" value="1"/>
</dbReference>
<dbReference type="PIRSF" id="PIRSF000033">
    <property type="entry name" value="B6f_17K"/>
    <property type="match status" value="1"/>
</dbReference>
<dbReference type="SUPFAM" id="SSF81648">
    <property type="entry name" value="a domain/subunit of cytochrome bc1 complex (Ubiquinol-cytochrome c reductase)"/>
    <property type="match status" value="1"/>
</dbReference>
<dbReference type="PROSITE" id="PS51003">
    <property type="entry name" value="CYTB_CTER"/>
    <property type="match status" value="1"/>
</dbReference>
<comment type="function">
    <text evidence="1">Component of the cytochrome b6-f complex, which mediates electron transfer between photosystem II (PSII) and photosystem I (PSI), cyclic electron flow around PSI, and state transitions.</text>
</comment>
<comment type="subunit">
    <text evidence="1">The 4 large subunits of the cytochrome b6-f complex are cytochrome b6, subunit IV (17 kDa polypeptide, PetD), cytochrome f and the Rieske protein, while the 4 small subunits are PetG, PetL, PetM and PetN. The complex functions as a dimer.</text>
</comment>
<comment type="subcellular location">
    <subcellularLocation>
        <location evidence="1">Cellular thylakoid membrane</location>
        <topology evidence="1">Multi-pass membrane protein</topology>
    </subcellularLocation>
</comment>
<comment type="similarity">
    <text evidence="1">Belongs to the cytochrome b family. PetD subfamily.</text>
</comment>